<organism>
    <name type="scientific">Corynebacterium glutamicum (strain ATCC 13032 / DSM 20300 / JCM 1318 / BCRC 11384 / CCUG 27702 / LMG 3730 / NBRC 12168 / NCIMB 10025 / NRRL B-2784 / 534)</name>
    <dbReference type="NCBI Taxonomy" id="196627"/>
    <lineage>
        <taxon>Bacteria</taxon>
        <taxon>Bacillati</taxon>
        <taxon>Actinomycetota</taxon>
        <taxon>Actinomycetes</taxon>
        <taxon>Mycobacteriales</taxon>
        <taxon>Corynebacteriaceae</taxon>
        <taxon>Corynebacterium</taxon>
    </lineage>
</organism>
<keyword id="KW-0414">Isoprene biosynthesis</keyword>
<keyword id="KW-0460">Magnesium</keyword>
<keyword id="KW-0479">Metal-binding</keyword>
<keyword id="KW-1185">Reference proteome</keyword>
<keyword id="KW-0784">Thiamine biosynthesis</keyword>
<keyword id="KW-0786">Thiamine pyrophosphate</keyword>
<keyword id="KW-0808">Transferase</keyword>
<accession>Q8NPB2</accession>
<name>DXS_CORGL</name>
<reference key="1">
    <citation type="journal article" date="2003" name="Appl. Microbiol. Biotechnol.">
        <title>The Corynebacterium glutamicum genome: features and impacts on biotechnological processes.</title>
        <authorList>
            <person name="Ikeda M."/>
            <person name="Nakagawa S."/>
        </authorList>
    </citation>
    <scope>NUCLEOTIDE SEQUENCE [LARGE SCALE GENOMIC DNA]</scope>
    <source>
        <strain>ATCC 13032 / DSM 20300 / JCM 1318 / BCRC 11384 / CCUG 27702 / LMG 3730 / NBRC 12168 / NCIMB 10025 / NRRL B-2784 / 534</strain>
    </source>
</reference>
<reference key="2">
    <citation type="journal article" date="2003" name="J. Biotechnol.">
        <title>The complete Corynebacterium glutamicum ATCC 13032 genome sequence and its impact on the production of L-aspartate-derived amino acids and vitamins.</title>
        <authorList>
            <person name="Kalinowski J."/>
            <person name="Bathe B."/>
            <person name="Bartels D."/>
            <person name="Bischoff N."/>
            <person name="Bott M."/>
            <person name="Burkovski A."/>
            <person name="Dusch N."/>
            <person name="Eggeling L."/>
            <person name="Eikmanns B.J."/>
            <person name="Gaigalat L."/>
            <person name="Goesmann A."/>
            <person name="Hartmann M."/>
            <person name="Huthmacher K."/>
            <person name="Kraemer R."/>
            <person name="Linke B."/>
            <person name="McHardy A.C."/>
            <person name="Meyer F."/>
            <person name="Moeckel B."/>
            <person name="Pfefferle W."/>
            <person name="Puehler A."/>
            <person name="Rey D.A."/>
            <person name="Rueckert C."/>
            <person name="Rupp O."/>
            <person name="Sahm H."/>
            <person name="Wendisch V.F."/>
            <person name="Wiegraebe I."/>
            <person name="Tauch A."/>
        </authorList>
    </citation>
    <scope>NUCLEOTIDE SEQUENCE [LARGE SCALE GENOMIC DNA]</scope>
    <source>
        <strain>ATCC 13032 / DSM 20300 / JCM 1318 / BCRC 11384 / CCUG 27702 / LMG 3730 / NBRC 12168 / NCIMB 10025 / NRRL B-2784 / 534</strain>
    </source>
</reference>
<feature type="chain" id="PRO_0000189109" description="1-deoxy-D-xylulose-5-phosphate synthase">
    <location>
        <begin position="1"/>
        <end position="636"/>
    </location>
</feature>
<feature type="binding site" evidence="1">
    <location>
        <position position="73"/>
    </location>
    <ligand>
        <name>thiamine diphosphate</name>
        <dbReference type="ChEBI" id="CHEBI:58937"/>
    </ligand>
</feature>
<feature type="binding site" evidence="1">
    <location>
        <begin position="114"/>
        <end position="116"/>
    </location>
    <ligand>
        <name>thiamine diphosphate</name>
        <dbReference type="ChEBI" id="CHEBI:58937"/>
    </ligand>
</feature>
<feature type="binding site" evidence="1">
    <location>
        <position position="146"/>
    </location>
    <ligand>
        <name>Mg(2+)</name>
        <dbReference type="ChEBI" id="CHEBI:18420"/>
    </ligand>
</feature>
<feature type="binding site" evidence="1">
    <location>
        <begin position="147"/>
        <end position="148"/>
    </location>
    <ligand>
        <name>thiamine diphosphate</name>
        <dbReference type="ChEBI" id="CHEBI:58937"/>
    </ligand>
</feature>
<feature type="binding site" evidence="1">
    <location>
        <position position="176"/>
    </location>
    <ligand>
        <name>Mg(2+)</name>
        <dbReference type="ChEBI" id="CHEBI:18420"/>
    </ligand>
</feature>
<feature type="binding site" evidence="1">
    <location>
        <position position="176"/>
    </location>
    <ligand>
        <name>thiamine diphosphate</name>
        <dbReference type="ChEBI" id="CHEBI:58937"/>
    </ligand>
</feature>
<feature type="binding site" evidence="1">
    <location>
        <position position="287"/>
    </location>
    <ligand>
        <name>thiamine diphosphate</name>
        <dbReference type="ChEBI" id="CHEBI:58937"/>
    </ligand>
</feature>
<feature type="binding site" evidence="1">
    <location>
        <position position="368"/>
    </location>
    <ligand>
        <name>thiamine diphosphate</name>
        <dbReference type="ChEBI" id="CHEBI:58937"/>
    </ligand>
</feature>
<protein>
    <recommendedName>
        <fullName evidence="1">1-deoxy-D-xylulose-5-phosphate synthase</fullName>
        <ecNumber evidence="1">2.2.1.7</ecNumber>
    </recommendedName>
    <alternativeName>
        <fullName evidence="1">1-deoxyxylulose-5-phosphate synthase</fullName>
        <shortName evidence="1">DXP synthase</shortName>
        <shortName evidence="1">DXPS</shortName>
    </alternativeName>
</protein>
<proteinExistence type="inferred from homology"/>
<sequence length="636" mass="67880">MGILNSISTPADLKALNDEDLDALAKEIRTFLVDKVAATGGHLGPNLGVVELTIGLHRVFDSPQDPIIFDTSHQSYVHKILTGRAKDFDSLRQKDGLSGYTCRAESEHDWTESSHASAALSYADGLSKAKQLDGDTTHSVVAVVGDGALTGGMCWEALNNIAAGKDRKVVVVVNDNGRSYSPTIGGFAENLAGLRMQPFYDRFMEKGKTSLKSMGWVGERTFEALHAFKEGVKSTVIPTEMFPELGMKYVGPVDGHNQKAVDNALKYAHDYDGPIIVHMVTEKGRGYAPAEQDLDELMHSTGVIDPLTGAPKSASKPGWTSVFSDELVKIGAQNENVVAITAAMAGPTGLSKFEANFPNRFFDVGIAEQHAVTSAAGLALGGKHPVVAIYSTFLNRAFDQLLMDVGMLNQPVTLVLDRSGVTGSDGASHNGVWDMALTSIVPGVQVAAPRDEDSLRELLNEAISIDDGPTVVRFPKGDLPTPIVAIDTLEDGVDVLAYEDATDVESTDDAPSVLIIAVGERATVALDVASRIKQHGVNVTVVDPRWIVPIPQSLVALSDDHDLVITIEDGVIHGGVGSLLSDALNASEVDTPRRQIAVPQKYLDHASRNEVLADYGLDADGIETTVVGWLDSLFGE</sequence>
<evidence type="ECO:0000255" key="1">
    <source>
        <dbReference type="HAMAP-Rule" id="MF_00315"/>
    </source>
</evidence>
<comment type="function">
    <text evidence="1">Catalyzes the acyloin condensation reaction between C atoms 2 and 3 of pyruvate and glyceraldehyde 3-phosphate to yield 1-deoxy-D-xylulose-5-phosphate (DXP).</text>
</comment>
<comment type="catalytic activity">
    <reaction evidence="1">
        <text>D-glyceraldehyde 3-phosphate + pyruvate + H(+) = 1-deoxy-D-xylulose 5-phosphate + CO2</text>
        <dbReference type="Rhea" id="RHEA:12605"/>
        <dbReference type="ChEBI" id="CHEBI:15361"/>
        <dbReference type="ChEBI" id="CHEBI:15378"/>
        <dbReference type="ChEBI" id="CHEBI:16526"/>
        <dbReference type="ChEBI" id="CHEBI:57792"/>
        <dbReference type="ChEBI" id="CHEBI:59776"/>
        <dbReference type="EC" id="2.2.1.7"/>
    </reaction>
</comment>
<comment type="cofactor">
    <cofactor evidence="1">
        <name>Mg(2+)</name>
        <dbReference type="ChEBI" id="CHEBI:18420"/>
    </cofactor>
    <text evidence="1">Binds 1 Mg(2+) ion per subunit.</text>
</comment>
<comment type="cofactor">
    <cofactor evidence="1">
        <name>thiamine diphosphate</name>
        <dbReference type="ChEBI" id="CHEBI:58937"/>
    </cofactor>
    <text evidence="1">Binds 1 thiamine pyrophosphate per subunit.</text>
</comment>
<comment type="pathway">
    <text evidence="1">Metabolic intermediate biosynthesis; 1-deoxy-D-xylulose 5-phosphate biosynthesis; 1-deoxy-D-xylulose 5-phosphate from D-glyceraldehyde 3-phosphate and pyruvate: step 1/1.</text>
</comment>
<comment type="subunit">
    <text evidence="1">Homodimer.</text>
</comment>
<comment type="similarity">
    <text evidence="1">Belongs to the transketolase family. DXPS subfamily.</text>
</comment>
<gene>
    <name evidence="1" type="primary">dxs</name>
    <name type="ordered locus">Cgl1902</name>
    <name type="ordered locus">cg2083</name>
</gene>
<dbReference type="EC" id="2.2.1.7" evidence="1"/>
<dbReference type="EMBL" id="BA000036">
    <property type="protein sequence ID" value="BAB99295.1"/>
    <property type="molecule type" value="Genomic_DNA"/>
</dbReference>
<dbReference type="EMBL" id="BX927153">
    <property type="protein sequence ID" value="CAF20242.1"/>
    <property type="molecule type" value="Genomic_DNA"/>
</dbReference>
<dbReference type="RefSeq" id="NP_601108.1">
    <property type="nucleotide sequence ID" value="NC_003450.3"/>
</dbReference>
<dbReference type="RefSeq" id="WP_011014741.1">
    <property type="nucleotide sequence ID" value="NC_006958.1"/>
</dbReference>
<dbReference type="SMR" id="Q8NPB2"/>
<dbReference type="STRING" id="196627.cg2083"/>
<dbReference type="GeneID" id="1019859"/>
<dbReference type="KEGG" id="cgb:cg2083"/>
<dbReference type="KEGG" id="cgl:Cgl1902"/>
<dbReference type="PATRIC" id="fig|196627.13.peg.1839"/>
<dbReference type="eggNOG" id="COG1154">
    <property type="taxonomic scope" value="Bacteria"/>
</dbReference>
<dbReference type="HOGENOM" id="CLU_009227_1_4_11"/>
<dbReference type="OrthoDB" id="9803371at2"/>
<dbReference type="BioCyc" id="CORYNE:G18NG-11494-MONOMER"/>
<dbReference type="UniPathway" id="UPA00064">
    <property type="reaction ID" value="UER00091"/>
</dbReference>
<dbReference type="Proteomes" id="UP000000582">
    <property type="component" value="Chromosome"/>
</dbReference>
<dbReference type="Proteomes" id="UP000001009">
    <property type="component" value="Chromosome"/>
</dbReference>
<dbReference type="GO" id="GO:0005829">
    <property type="term" value="C:cytosol"/>
    <property type="evidence" value="ECO:0007669"/>
    <property type="project" value="TreeGrafter"/>
</dbReference>
<dbReference type="GO" id="GO:0008661">
    <property type="term" value="F:1-deoxy-D-xylulose-5-phosphate synthase activity"/>
    <property type="evidence" value="ECO:0007669"/>
    <property type="project" value="UniProtKB-UniRule"/>
</dbReference>
<dbReference type="GO" id="GO:0000287">
    <property type="term" value="F:magnesium ion binding"/>
    <property type="evidence" value="ECO:0007669"/>
    <property type="project" value="UniProtKB-UniRule"/>
</dbReference>
<dbReference type="GO" id="GO:0030976">
    <property type="term" value="F:thiamine pyrophosphate binding"/>
    <property type="evidence" value="ECO:0007669"/>
    <property type="project" value="UniProtKB-UniRule"/>
</dbReference>
<dbReference type="GO" id="GO:0052865">
    <property type="term" value="P:1-deoxy-D-xylulose 5-phosphate biosynthetic process"/>
    <property type="evidence" value="ECO:0007669"/>
    <property type="project" value="UniProtKB-UniPathway"/>
</dbReference>
<dbReference type="GO" id="GO:0019288">
    <property type="term" value="P:isopentenyl diphosphate biosynthetic process, methylerythritol 4-phosphate pathway"/>
    <property type="evidence" value="ECO:0007669"/>
    <property type="project" value="TreeGrafter"/>
</dbReference>
<dbReference type="GO" id="GO:0016114">
    <property type="term" value="P:terpenoid biosynthetic process"/>
    <property type="evidence" value="ECO:0007669"/>
    <property type="project" value="UniProtKB-UniRule"/>
</dbReference>
<dbReference type="GO" id="GO:0009228">
    <property type="term" value="P:thiamine biosynthetic process"/>
    <property type="evidence" value="ECO:0007669"/>
    <property type="project" value="UniProtKB-UniRule"/>
</dbReference>
<dbReference type="CDD" id="cd02007">
    <property type="entry name" value="TPP_DXS"/>
    <property type="match status" value="1"/>
</dbReference>
<dbReference type="CDD" id="cd07033">
    <property type="entry name" value="TPP_PYR_DXS_TK_like"/>
    <property type="match status" value="1"/>
</dbReference>
<dbReference type="FunFam" id="3.40.50.970:FF:000005">
    <property type="entry name" value="1-deoxy-D-xylulose-5-phosphate synthase"/>
    <property type="match status" value="1"/>
</dbReference>
<dbReference type="Gene3D" id="3.40.50.920">
    <property type="match status" value="1"/>
</dbReference>
<dbReference type="Gene3D" id="3.40.50.970">
    <property type="match status" value="2"/>
</dbReference>
<dbReference type="HAMAP" id="MF_00315">
    <property type="entry name" value="DXP_synth"/>
    <property type="match status" value="1"/>
</dbReference>
<dbReference type="InterPro" id="IPR005477">
    <property type="entry name" value="Dxylulose-5-P_synthase"/>
</dbReference>
<dbReference type="InterPro" id="IPR029061">
    <property type="entry name" value="THDP-binding"/>
</dbReference>
<dbReference type="InterPro" id="IPR009014">
    <property type="entry name" value="Transketo_C/PFOR_II"/>
</dbReference>
<dbReference type="InterPro" id="IPR005475">
    <property type="entry name" value="Transketolase-like_Pyr-bd"/>
</dbReference>
<dbReference type="InterPro" id="IPR020826">
    <property type="entry name" value="Transketolase_BS"/>
</dbReference>
<dbReference type="InterPro" id="IPR033248">
    <property type="entry name" value="Transketolase_C"/>
</dbReference>
<dbReference type="InterPro" id="IPR049557">
    <property type="entry name" value="Transketolase_CS"/>
</dbReference>
<dbReference type="NCBIfam" id="TIGR00204">
    <property type="entry name" value="dxs"/>
    <property type="match status" value="1"/>
</dbReference>
<dbReference type="NCBIfam" id="NF003933">
    <property type="entry name" value="PRK05444.2-2"/>
    <property type="match status" value="1"/>
</dbReference>
<dbReference type="PANTHER" id="PTHR43322">
    <property type="entry name" value="1-D-DEOXYXYLULOSE 5-PHOSPHATE SYNTHASE-RELATED"/>
    <property type="match status" value="1"/>
</dbReference>
<dbReference type="PANTHER" id="PTHR43322:SF5">
    <property type="entry name" value="1-DEOXY-D-XYLULOSE-5-PHOSPHATE SYNTHASE, CHLOROPLASTIC"/>
    <property type="match status" value="1"/>
</dbReference>
<dbReference type="Pfam" id="PF13292">
    <property type="entry name" value="DXP_synthase_N"/>
    <property type="match status" value="1"/>
</dbReference>
<dbReference type="Pfam" id="PF02779">
    <property type="entry name" value="Transket_pyr"/>
    <property type="match status" value="1"/>
</dbReference>
<dbReference type="Pfam" id="PF02780">
    <property type="entry name" value="Transketolase_C"/>
    <property type="match status" value="1"/>
</dbReference>
<dbReference type="SMART" id="SM00861">
    <property type="entry name" value="Transket_pyr"/>
    <property type="match status" value="1"/>
</dbReference>
<dbReference type="SUPFAM" id="SSF52518">
    <property type="entry name" value="Thiamin diphosphate-binding fold (THDP-binding)"/>
    <property type="match status" value="1"/>
</dbReference>
<dbReference type="SUPFAM" id="SSF52922">
    <property type="entry name" value="TK C-terminal domain-like"/>
    <property type="match status" value="1"/>
</dbReference>
<dbReference type="PROSITE" id="PS00801">
    <property type="entry name" value="TRANSKETOLASE_1"/>
    <property type="match status" value="1"/>
</dbReference>
<dbReference type="PROSITE" id="PS00802">
    <property type="entry name" value="TRANSKETOLASE_2"/>
    <property type="match status" value="1"/>
</dbReference>